<proteinExistence type="evidence at transcript level"/>
<gene>
    <name type="primary">OR2F1</name>
    <name type="synonym">OLF3</name>
    <name type="synonym">OR2F3</name>
    <name type="synonym">OR2F3P</name>
    <name type="synonym">OR2F4</name>
    <name type="synonym">OR2F5</name>
</gene>
<feature type="chain" id="PRO_0000150469" description="Olfactory receptor 2F1">
    <location>
        <begin position="1"/>
        <end position="317"/>
    </location>
</feature>
<feature type="topological domain" description="Extracellular" evidence="1">
    <location>
        <begin position="1"/>
        <end position="24"/>
    </location>
</feature>
<feature type="transmembrane region" description="Helical; Name=1" evidence="1">
    <location>
        <begin position="25"/>
        <end position="48"/>
    </location>
</feature>
<feature type="topological domain" description="Cytoplasmic" evidence="1">
    <location>
        <begin position="49"/>
        <end position="57"/>
    </location>
</feature>
<feature type="transmembrane region" description="Helical; Name=2" evidence="1">
    <location>
        <begin position="58"/>
        <end position="79"/>
    </location>
</feature>
<feature type="topological domain" description="Extracellular" evidence="1">
    <location>
        <begin position="80"/>
        <end position="100"/>
    </location>
</feature>
<feature type="transmembrane region" description="Helical; Name=3" evidence="1">
    <location>
        <begin position="101"/>
        <end position="120"/>
    </location>
</feature>
<feature type="topological domain" description="Cytoplasmic" evidence="1">
    <location>
        <begin position="121"/>
        <end position="139"/>
    </location>
</feature>
<feature type="transmembrane region" description="Helical; Name=4" evidence="1">
    <location>
        <begin position="140"/>
        <end position="160"/>
    </location>
</feature>
<feature type="topological domain" description="Extracellular" evidence="1">
    <location>
        <begin position="161"/>
        <end position="200"/>
    </location>
</feature>
<feature type="transmembrane region" description="Helical; Name=5" evidence="1">
    <location>
        <begin position="201"/>
        <end position="222"/>
    </location>
</feature>
<feature type="topological domain" description="Cytoplasmic" evidence="1">
    <location>
        <begin position="223"/>
        <end position="236"/>
    </location>
</feature>
<feature type="transmembrane region" description="Helical; Name=6" evidence="1">
    <location>
        <begin position="237"/>
        <end position="261"/>
    </location>
</feature>
<feature type="topological domain" description="Extracellular" evidence="1">
    <location>
        <begin position="262"/>
        <end position="272"/>
    </location>
</feature>
<feature type="transmembrane region" description="Helical; Name=7" evidence="1">
    <location>
        <begin position="273"/>
        <end position="292"/>
    </location>
</feature>
<feature type="topological domain" description="Cytoplasmic" evidence="1">
    <location>
        <begin position="293"/>
        <end position="317"/>
    </location>
</feature>
<feature type="glycosylation site" description="N-linked (GlcNAc...) asparagine" evidence="1">
    <location>
        <position position="5"/>
    </location>
</feature>
<feature type="disulfide bond" evidence="2">
    <location>
        <begin position="97"/>
        <end position="189"/>
    </location>
</feature>
<feature type="sequence variant" id="VAR_053136" description="In dbSNP:rs2072164.">
    <original>R</original>
    <variation>C</variation>
    <location>
        <position position="122"/>
    </location>
</feature>
<feature type="sequence variant" id="VAR_053137" description="In dbSNP:rs2072165.">
    <original>H</original>
    <variation>R</variation>
    <location>
        <position position="137"/>
    </location>
</feature>
<feature type="sequence conflict" description="In Ref. 1; AAB01215." evidence="3" ref="1">
    <original>F</original>
    <variation>L</variation>
    <location>
        <position position="211"/>
    </location>
</feature>
<comment type="function">
    <text evidence="3">Odorant receptor.</text>
</comment>
<comment type="subcellular location">
    <subcellularLocation>
        <location>Cell membrane</location>
        <topology>Multi-pass membrane protein</topology>
    </subcellularLocation>
</comment>
<comment type="similarity">
    <text evidence="2">Belongs to the G-protein coupled receptor 1 family.</text>
</comment>
<comment type="online information" name="Human Olfactory Receptor Data Exploratorium (HORDE)">
    <link uri="http://genome.weizmann.ac.il/horde/card/index/symbol:OR2F1"/>
</comment>
<accession>Q13607</accession>
<accession>A4D2G1</accession>
<accession>Q6IFP7</accession>
<accession>Q96R49</accession>
<accession>Q9UDX1</accession>
<protein>
    <recommendedName>
        <fullName>Olfactory receptor 2F1</fullName>
    </recommendedName>
    <alternativeName>
        <fullName>Olfactory receptor 2F3</fullName>
    </alternativeName>
    <alternativeName>
        <fullName>Olfactory receptor 2F4</fullName>
    </alternativeName>
    <alternativeName>
        <fullName>Olfactory receptor 2F5</fullName>
    </alternativeName>
    <alternativeName>
        <fullName>Olfactory receptor-like protein OLF3</fullName>
    </alternativeName>
</protein>
<organism>
    <name type="scientific">Homo sapiens</name>
    <name type="common">Human</name>
    <dbReference type="NCBI Taxonomy" id="9606"/>
    <lineage>
        <taxon>Eukaryota</taxon>
        <taxon>Metazoa</taxon>
        <taxon>Chordata</taxon>
        <taxon>Craniata</taxon>
        <taxon>Vertebrata</taxon>
        <taxon>Euteleostomi</taxon>
        <taxon>Mammalia</taxon>
        <taxon>Eutheria</taxon>
        <taxon>Euarchontoglires</taxon>
        <taxon>Primates</taxon>
        <taxon>Haplorrhini</taxon>
        <taxon>Catarrhini</taxon>
        <taxon>Hominidae</taxon>
        <taxon>Homo</taxon>
    </lineage>
</organism>
<dbReference type="EMBL" id="U56421">
    <property type="protein sequence ID" value="AAB01215.1"/>
    <property type="molecule type" value="Genomic_DNA"/>
</dbReference>
<dbReference type="EMBL" id="AC004853">
    <property type="protein sequence ID" value="AAC64376.1"/>
    <property type="molecule type" value="Genomic_DNA"/>
</dbReference>
<dbReference type="EMBL" id="CH236959">
    <property type="protein sequence ID" value="EAL23795.1"/>
    <property type="molecule type" value="Genomic_DNA"/>
</dbReference>
<dbReference type="EMBL" id="CH878732">
    <property type="protein sequence ID" value="EAW55625.1"/>
    <property type="molecule type" value="Genomic_DNA"/>
</dbReference>
<dbReference type="EMBL" id="BC104975">
    <property type="protein sequence ID" value="AAI04976.1"/>
    <property type="molecule type" value="mRNA"/>
</dbReference>
<dbReference type="EMBL" id="AF399594">
    <property type="protein sequence ID" value="AAK95079.1"/>
    <property type="molecule type" value="Genomic_DNA"/>
</dbReference>
<dbReference type="EMBL" id="BK004215">
    <property type="protein sequence ID" value="DAA04613.1"/>
    <property type="molecule type" value="Genomic_DNA"/>
</dbReference>
<dbReference type="RefSeq" id="NP_036501.2">
    <property type="nucleotide sequence ID" value="NM_012369.3"/>
</dbReference>
<dbReference type="RefSeq" id="XP_011514321.1">
    <property type="nucleotide sequence ID" value="XM_011516019.2"/>
</dbReference>
<dbReference type="RefSeq" id="XP_011514322.1">
    <property type="nucleotide sequence ID" value="XM_011516020.2"/>
</dbReference>
<dbReference type="SMR" id="Q13607"/>
<dbReference type="FunCoup" id="Q13607">
    <property type="interactions" value="474"/>
</dbReference>
<dbReference type="STRING" id="9606.ENSP00000485483"/>
<dbReference type="GlyCosmos" id="Q13607">
    <property type="glycosylation" value="1 site, No reported glycans"/>
</dbReference>
<dbReference type="GlyGen" id="Q13607">
    <property type="glycosylation" value="1 site"/>
</dbReference>
<dbReference type="iPTMnet" id="Q13607"/>
<dbReference type="PhosphoSitePlus" id="Q13607"/>
<dbReference type="BioMuta" id="OR2F1"/>
<dbReference type="DMDM" id="9297120"/>
<dbReference type="PaxDb" id="9606-ENSP00000485535"/>
<dbReference type="PeptideAtlas" id="Q13607"/>
<dbReference type="Antibodypedia" id="32698">
    <property type="antibodies" value="11 antibodies from 8 providers"/>
</dbReference>
<dbReference type="DNASU" id="26211"/>
<dbReference type="Ensembl" id="ENST00000624504.1">
    <property type="protein sequence ID" value="ENSP00000485483.1"/>
    <property type="gene ID" value="ENSG00000213215.5"/>
</dbReference>
<dbReference type="Ensembl" id="ENST00000641412.1">
    <property type="protein sequence ID" value="ENSP00000493004.1"/>
    <property type="gene ID" value="ENSG00000213215.5"/>
</dbReference>
<dbReference type="Ensembl" id="ENST00000643449.1">
    <property type="protein sequence ID" value="ENSP00000495065.1"/>
    <property type="gene ID" value="ENSG00000284866.1"/>
</dbReference>
<dbReference type="Ensembl" id="ENST00000646094.1">
    <property type="protein sequence ID" value="ENSP00000496442.1"/>
    <property type="gene ID" value="ENSG00000284866.1"/>
</dbReference>
<dbReference type="GeneID" id="26211"/>
<dbReference type="KEGG" id="hsa:26211"/>
<dbReference type="MANE-Select" id="ENST00000641412.1">
    <property type="protein sequence ID" value="ENSP00000493004.1"/>
    <property type="RefSeq nucleotide sequence ID" value="NM_012369.3"/>
    <property type="RefSeq protein sequence ID" value="NP_036501.2"/>
</dbReference>
<dbReference type="UCSC" id="uc003wds.1">
    <property type="organism name" value="human"/>
</dbReference>
<dbReference type="AGR" id="HGNC:8246"/>
<dbReference type="CTD" id="26211"/>
<dbReference type="GeneCards" id="OR2F1"/>
<dbReference type="HGNC" id="HGNC:8246">
    <property type="gene designation" value="OR2F1"/>
</dbReference>
<dbReference type="HPA" id="ENSG00000213215">
    <property type="expression patterns" value="Not detected"/>
</dbReference>
<dbReference type="MIM" id="608497">
    <property type="type" value="gene"/>
</dbReference>
<dbReference type="neXtProt" id="NX_Q13607"/>
<dbReference type="PharmGKB" id="PA32155"/>
<dbReference type="VEuPathDB" id="HostDB:ENSG00000213215"/>
<dbReference type="eggNOG" id="ENOG502SKV6">
    <property type="taxonomic scope" value="Eukaryota"/>
</dbReference>
<dbReference type="GeneTree" id="ENSGT01130000278310"/>
<dbReference type="HOGENOM" id="CLU_012526_1_0_1"/>
<dbReference type="InParanoid" id="Q13607"/>
<dbReference type="OMA" id="VFLMTPF"/>
<dbReference type="OrthoDB" id="9007674at2759"/>
<dbReference type="PAN-GO" id="Q13607">
    <property type="GO annotations" value="0 GO annotations based on evolutionary models"/>
</dbReference>
<dbReference type="PhylomeDB" id="Q13607"/>
<dbReference type="TreeFam" id="TF337251"/>
<dbReference type="PathwayCommons" id="Q13607"/>
<dbReference type="Reactome" id="R-HSA-381753">
    <property type="pathway name" value="Olfactory Signaling Pathway"/>
</dbReference>
<dbReference type="Reactome" id="R-HSA-9752946">
    <property type="pathway name" value="Expression and translocation of olfactory receptors"/>
</dbReference>
<dbReference type="BioGRID-ORCS" id="26211">
    <property type="hits" value="10 hits in 703 CRISPR screens"/>
</dbReference>
<dbReference type="ChiTaRS" id="OR2F1">
    <property type="organism name" value="human"/>
</dbReference>
<dbReference type="GeneWiki" id="OR2F1"/>
<dbReference type="GenomeRNAi" id="26211"/>
<dbReference type="Pharos" id="Q13607">
    <property type="development level" value="Tdark"/>
</dbReference>
<dbReference type="PRO" id="PR:Q13607"/>
<dbReference type="Proteomes" id="UP000005640">
    <property type="component" value="Chromosome 7"/>
</dbReference>
<dbReference type="RNAct" id="Q13607">
    <property type="molecule type" value="protein"/>
</dbReference>
<dbReference type="Bgee" id="ENSG00000213215">
    <property type="expression patterns" value="Expressed in tibial artery and 89 other cell types or tissues"/>
</dbReference>
<dbReference type="ExpressionAtlas" id="Q13607">
    <property type="expression patterns" value="baseline and differential"/>
</dbReference>
<dbReference type="GO" id="GO:0005886">
    <property type="term" value="C:plasma membrane"/>
    <property type="evidence" value="ECO:0000318"/>
    <property type="project" value="GO_Central"/>
</dbReference>
<dbReference type="GO" id="GO:0004930">
    <property type="term" value="F:G protein-coupled receptor activity"/>
    <property type="evidence" value="ECO:0007669"/>
    <property type="project" value="UniProtKB-KW"/>
</dbReference>
<dbReference type="GO" id="GO:0004984">
    <property type="term" value="F:olfactory receptor activity"/>
    <property type="evidence" value="ECO:0000318"/>
    <property type="project" value="GO_Central"/>
</dbReference>
<dbReference type="GO" id="GO:0050911">
    <property type="term" value="P:detection of chemical stimulus involved in sensory perception of smell"/>
    <property type="evidence" value="ECO:0000318"/>
    <property type="project" value="GO_Central"/>
</dbReference>
<dbReference type="GO" id="GO:0007165">
    <property type="term" value="P:signal transduction"/>
    <property type="evidence" value="ECO:0000303"/>
    <property type="project" value="ProtInc"/>
</dbReference>
<dbReference type="CDD" id="cd15429">
    <property type="entry name" value="7tmA_OR2F-like"/>
    <property type="match status" value="1"/>
</dbReference>
<dbReference type="FunFam" id="1.20.1070.10:FF:000005">
    <property type="entry name" value="Olfactory receptor"/>
    <property type="match status" value="1"/>
</dbReference>
<dbReference type="Gene3D" id="1.20.1070.10">
    <property type="entry name" value="Rhodopsin 7-helix transmembrane proteins"/>
    <property type="match status" value="1"/>
</dbReference>
<dbReference type="InterPro" id="IPR000276">
    <property type="entry name" value="GPCR_Rhodpsn"/>
</dbReference>
<dbReference type="InterPro" id="IPR017452">
    <property type="entry name" value="GPCR_Rhodpsn_7TM"/>
</dbReference>
<dbReference type="InterPro" id="IPR000725">
    <property type="entry name" value="Olfact_rcpt"/>
</dbReference>
<dbReference type="PANTHER" id="PTHR26453">
    <property type="entry name" value="OLFACTORY RECEPTOR"/>
    <property type="match status" value="1"/>
</dbReference>
<dbReference type="Pfam" id="PF13853">
    <property type="entry name" value="7tm_4"/>
    <property type="match status" value="1"/>
</dbReference>
<dbReference type="PRINTS" id="PR00237">
    <property type="entry name" value="GPCRRHODOPSN"/>
</dbReference>
<dbReference type="PRINTS" id="PR00245">
    <property type="entry name" value="OLFACTORYR"/>
</dbReference>
<dbReference type="SUPFAM" id="SSF81321">
    <property type="entry name" value="Family A G protein-coupled receptor-like"/>
    <property type="match status" value="1"/>
</dbReference>
<dbReference type="PROSITE" id="PS00237">
    <property type="entry name" value="G_PROTEIN_RECEP_F1_1"/>
    <property type="match status" value="1"/>
</dbReference>
<dbReference type="PROSITE" id="PS50262">
    <property type="entry name" value="G_PROTEIN_RECEP_F1_2"/>
    <property type="match status" value="1"/>
</dbReference>
<evidence type="ECO:0000255" key="1"/>
<evidence type="ECO:0000255" key="2">
    <source>
        <dbReference type="PROSITE-ProRule" id="PRU00521"/>
    </source>
</evidence>
<evidence type="ECO:0000305" key="3"/>
<sequence length="317" mass="35350">MGTDNQTWVSEFILLGLSSDWDTRVSLFVLFLVMYVVTVLGNCLIVLLIRLDSRLHTPMYFFLTNLSLVDVSYATSVVPQLLAHFLAEHKAIPFQSCAAQLFFSLALGGIEFVLLAVMAYDRYVAVCDALRYSAIMHGGLCARLAITSWVSGFISSPVQTAITFQLPMCRNKFIDHISCELLAVVRLACVDTSSNEVTIMVSSIVLLMTPFCLVLLSYIQIISTILKIQSREGRKKAFHTCASHLTVVALCYGVAIFTYIQPHSSPSVLQEKLFSVFYAILTPMLNPMIYSLRNKEVKGAWQKLLWKFSGLTSKLAT</sequence>
<name>OR2F1_HUMAN</name>
<reference key="1">
    <citation type="journal article" date="1997" name="Genetics">
        <title>The evolution of mammalian olfactory receptor genes.</title>
        <authorList>
            <person name="Issel-Tarver L."/>
            <person name="Rine J."/>
        </authorList>
    </citation>
    <scope>NUCLEOTIDE SEQUENCE [GENOMIC DNA]</scope>
</reference>
<reference key="2">
    <citation type="journal article" date="2003" name="Science">
        <title>Human chromosome 7: DNA sequence and biology.</title>
        <authorList>
            <person name="Scherer S.W."/>
            <person name="Cheung J."/>
            <person name="MacDonald J.R."/>
            <person name="Osborne L.R."/>
            <person name="Nakabayashi K."/>
            <person name="Herbrick J.-A."/>
            <person name="Carson A.R."/>
            <person name="Parker-Katiraee L."/>
            <person name="Skaug J."/>
            <person name="Khaja R."/>
            <person name="Zhang J."/>
            <person name="Hudek A.K."/>
            <person name="Li M."/>
            <person name="Haddad M."/>
            <person name="Duggan G.E."/>
            <person name="Fernandez B.A."/>
            <person name="Kanematsu E."/>
            <person name="Gentles S."/>
            <person name="Christopoulos C.C."/>
            <person name="Choufani S."/>
            <person name="Kwasnicka D."/>
            <person name="Zheng X.H."/>
            <person name="Lai Z."/>
            <person name="Nusskern D.R."/>
            <person name="Zhang Q."/>
            <person name="Gu Z."/>
            <person name="Lu F."/>
            <person name="Zeesman S."/>
            <person name="Nowaczyk M.J."/>
            <person name="Teshima I."/>
            <person name="Chitayat D."/>
            <person name="Shuman C."/>
            <person name="Weksberg R."/>
            <person name="Zackai E.H."/>
            <person name="Grebe T.A."/>
            <person name="Cox S.R."/>
            <person name="Kirkpatrick S.J."/>
            <person name="Rahman N."/>
            <person name="Friedman J.M."/>
            <person name="Heng H.H.Q."/>
            <person name="Pelicci P.G."/>
            <person name="Lo-Coco F."/>
            <person name="Belloni E."/>
            <person name="Shaffer L.G."/>
            <person name="Pober B."/>
            <person name="Morton C.C."/>
            <person name="Gusella J.F."/>
            <person name="Bruns G.A.P."/>
            <person name="Korf B.R."/>
            <person name="Quade B.J."/>
            <person name="Ligon A.H."/>
            <person name="Ferguson H."/>
            <person name="Higgins A.W."/>
            <person name="Leach N.T."/>
            <person name="Herrick S.R."/>
            <person name="Lemyre E."/>
            <person name="Farra C.G."/>
            <person name="Kim H.-G."/>
            <person name="Summers A.M."/>
            <person name="Gripp K.W."/>
            <person name="Roberts W."/>
            <person name="Szatmari P."/>
            <person name="Winsor E.J.T."/>
            <person name="Grzeschik K.-H."/>
            <person name="Teebi A."/>
            <person name="Minassian B.A."/>
            <person name="Kere J."/>
            <person name="Armengol L."/>
            <person name="Pujana M.A."/>
            <person name="Estivill X."/>
            <person name="Wilson M.D."/>
            <person name="Koop B.F."/>
            <person name="Tosi S."/>
            <person name="Moore G.E."/>
            <person name="Boright A.P."/>
            <person name="Zlotorynski E."/>
            <person name="Kerem B."/>
            <person name="Kroisel P.M."/>
            <person name="Petek E."/>
            <person name="Oscier D.G."/>
            <person name="Mould S.J."/>
            <person name="Doehner H."/>
            <person name="Doehner K."/>
            <person name="Rommens J.M."/>
            <person name="Vincent J.B."/>
            <person name="Venter J.C."/>
            <person name="Li P.W."/>
            <person name="Mural R.J."/>
            <person name="Adams M.D."/>
            <person name="Tsui L.-C."/>
        </authorList>
    </citation>
    <scope>NUCLEOTIDE SEQUENCE [LARGE SCALE GENOMIC DNA]</scope>
</reference>
<reference key="3">
    <citation type="submission" date="2005-07" db="EMBL/GenBank/DDBJ databases">
        <authorList>
            <person name="Mural R.J."/>
            <person name="Istrail S."/>
            <person name="Sutton G.G."/>
            <person name="Florea L."/>
            <person name="Halpern A.L."/>
            <person name="Mobarry C.M."/>
            <person name="Lippert R."/>
            <person name="Walenz B."/>
            <person name="Shatkay H."/>
            <person name="Dew I."/>
            <person name="Miller J.R."/>
            <person name="Flanigan M.J."/>
            <person name="Edwards N.J."/>
            <person name="Bolanos R."/>
            <person name="Fasulo D."/>
            <person name="Halldorsson B.V."/>
            <person name="Hannenhalli S."/>
            <person name="Turner R."/>
            <person name="Yooseph S."/>
            <person name="Lu F."/>
            <person name="Nusskern D.R."/>
            <person name="Shue B.C."/>
            <person name="Zheng X.H."/>
            <person name="Zhong F."/>
            <person name="Delcher A.L."/>
            <person name="Huson D.H."/>
            <person name="Kravitz S.A."/>
            <person name="Mouchard L."/>
            <person name="Reinert K."/>
            <person name="Remington K.A."/>
            <person name="Clark A.G."/>
            <person name="Waterman M.S."/>
            <person name="Eichler E.E."/>
            <person name="Adams M.D."/>
            <person name="Hunkapiller M.W."/>
            <person name="Myers E.W."/>
            <person name="Venter J.C."/>
        </authorList>
    </citation>
    <scope>NUCLEOTIDE SEQUENCE [LARGE SCALE GENOMIC DNA]</scope>
</reference>
<reference key="4">
    <citation type="journal article" date="2003" name="Nature">
        <title>The DNA sequence of human chromosome 7.</title>
        <authorList>
            <person name="Hillier L.W."/>
            <person name="Fulton R.S."/>
            <person name="Fulton L.A."/>
            <person name="Graves T.A."/>
            <person name="Pepin K.H."/>
            <person name="Wagner-McPherson C."/>
            <person name="Layman D."/>
            <person name="Maas J."/>
            <person name="Jaeger S."/>
            <person name="Walker R."/>
            <person name="Wylie K."/>
            <person name="Sekhon M."/>
            <person name="Becker M.C."/>
            <person name="O'Laughlin M.D."/>
            <person name="Schaller M.E."/>
            <person name="Fewell G.A."/>
            <person name="Delehaunty K.D."/>
            <person name="Miner T.L."/>
            <person name="Nash W.E."/>
            <person name="Cordes M."/>
            <person name="Du H."/>
            <person name="Sun H."/>
            <person name="Edwards J."/>
            <person name="Bradshaw-Cordum H."/>
            <person name="Ali J."/>
            <person name="Andrews S."/>
            <person name="Isak A."/>
            <person name="Vanbrunt A."/>
            <person name="Nguyen C."/>
            <person name="Du F."/>
            <person name="Lamar B."/>
            <person name="Courtney L."/>
            <person name="Kalicki J."/>
            <person name="Ozersky P."/>
            <person name="Bielicki L."/>
            <person name="Scott K."/>
            <person name="Holmes A."/>
            <person name="Harkins R."/>
            <person name="Harris A."/>
            <person name="Strong C.M."/>
            <person name="Hou S."/>
            <person name="Tomlinson C."/>
            <person name="Dauphin-Kohlberg S."/>
            <person name="Kozlowicz-Reilly A."/>
            <person name="Leonard S."/>
            <person name="Rohlfing T."/>
            <person name="Rock S.M."/>
            <person name="Tin-Wollam A.-M."/>
            <person name="Abbott A."/>
            <person name="Minx P."/>
            <person name="Maupin R."/>
            <person name="Strowmatt C."/>
            <person name="Latreille P."/>
            <person name="Miller N."/>
            <person name="Johnson D."/>
            <person name="Murray J."/>
            <person name="Woessner J.P."/>
            <person name="Wendl M.C."/>
            <person name="Yang S.-P."/>
            <person name="Schultz B.R."/>
            <person name="Wallis J.W."/>
            <person name="Spieth J."/>
            <person name="Bieri T.A."/>
            <person name="Nelson J.O."/>
            <person name="Berkowicz N."/>
            <person name="Wohldmann P.E."/>
            <person name="Cook L.L."/>
            <person name="Hickenbotham M.T."/>
            <person name="Eldred J."/>
            <person name="Williams D."/>
            <person name="Bedell J.A."/>
            <person name="Mardis E.R."/>
            <person name="Clifton S.W."/>
            <person name="Chissoe S.L."/>
            <person name="Marra M.A."/>
            <person name="Raymond C."/>
            <person name="Haugen E."/>
            <person name="Gillett W."/>
            <person name="Zhou Y."/>
            <person name="James R."/>
            <person name="Phelps K."/>
            <person name="Iadanoto S."/>
            <person name="Bubb K."/>
            <person name="Simms E."/>
            <person name="Levy R."/>
            <person name="Clendenning J."/>
            <person name="Kaul R."/>
            <person name="Kent W.J."/>
            <person name="Furey T.S."/>
            <person name="Baertsch R.A."/>
            <person name="Brent M.R."/>
            <person name="Keibler E."/>
            <person name="Flicek P."/>
            <person name="Bork P."/>
            <person name="Suyama M."/>
            <person name="Bailey J.A."/>
            <person name="Portnoy M.E."/>
            <person name="Torrents D."/>
            <person name="Chinwalla A.T."/>
            <person name="Gish W.R."/>
            <person name="Eddy S.R."/>
            <person name="McPherson J.D."/>
            <person name="Olson M.V."/>
            <person name="Eichler E.E."/>
            <person name="Green E.D."/>
            <person name="Waterston R.H."/>
            <person name="Wilson R.K."/>
        </authorList>
    </citation>
    <scope>NUCLEOTIDE SEQUENCE [LARGE SCALE GENOMIC DNA]</scope>
</reference>
<reference key="5">
    <citation type="journal article" date="2004" name="Genome Res.">
        <title>The status, quality, and expansion of the NIH full-length cDNA project: the Mammalian Gene Collection (MGC).</title>
        <authorList>
            <consortium name="The MGC Project Team"/>
        </authorList>
    </citation>
    <scope>NUCLEOTIDE SEQUENCE [LARGE SCALE MRNA]</scope>
</reference>
<reference key="6">
    <citation type="journal article" date="2002" name="Genomics">
        <title>DEFOG: a practical scheme for deciphering families of genes.</title>
        <authorList>
            <person name="Fuchs T."/>
            <person name="Malecova B."/>
            <person name="Linhart C."/>
            <person name="Sharan R."/>
            <person name="Khen M."/>
            <person name="Herwig R."/>
            <person name="Shmulevich D."/>
            <person name="Elkon R."/>
            <person name="Steinfath M."/>
            <person name="O'Brien J.K."/>
            <person name="Radelof U."/>
            <person name="Lehrach H."/>
            <person name="Lancet D."/>
            <person name="Shamir R."/>
        </authorList>
    </citation>
    <scope>NUCLEOTIDE SEQUENCE [GENOMIC DNA] OF 68-283</scope>
</reference>
<reference key="7">
    <citation type="journal article" date="2004" name="Proc. Natl. Acad. Sci. U.S.A.">
        <title>The human olfactory receptor gene family.</title>
        <authorList>
            <person name="Malnic B."/>
            <person name="Godfrey P.A."/>
            <person name="Buck L.B."/>
        </authorList>
    </citation>
    <scope>IDENTIFICATION</scope>
</reference>
<reference key="8">
    <citation type="journal article" date="2004" name="Proc. Natl. Acad. Sci. U.S.A.">
        <authorList>
            <person name="Malnic B."/>
            <person name="Godfrey P.A."/>
            <person name="Buck L.B."/>
        </authorList>
    </citation>
    <scope>ERRATUM OF PUBMED:14983052</scope>
</reference>
<keyword id="KW-1003">Cell membrane</keyword>
<keyword id="KW-1015">Disulfide bond</keyword>
<keyword id="KW-0297">G-protein coupled receptor</keyword>
<keyword id="KW-0325">Glycoprotein</keyword>
<keyword id="KW-0472">Membrane</keyword>
<keyword id="KW-0552">Olfaction</keyword>
<keyword id="KW-0675">Receptor</keyword>
<keyword id="KW-1185">Reference proteome</keyword>
<keyword id="KW-0716">Sensory transduction</keyword>
<keyword id="KW-0807">Transducer</keyword>
<keyword id="KW-0812">Transmembrane</keyword>
<keyword id="KW-1133">Transmembrane helix</keyword>